<gene>
    <name evidence="2" type="primary">mutM</name>
    <name evidence="2" type="synonym">fpg</name>
    <name type="ordered locus">Pro_0370</name>
</gene>
<sequence>MPELPEVETVKRGLKNRLKDFYIHDVEVITPRSISSEGGSKAFVKNIIGLKSGEWTRRGKYLICSLHSSDREEIAGWWVVHLRMTGQFQWFQKKTKSCKHTRVRIWNKDGAEIRFVDTRNFGQMWWISPTFLPTEKITGLKKLGPEPFSKEFNPFYLQESLKKRKRSIKSSLLDQSIVAGAGNIYADESLFQAGILPTKESKKLNKTEIKKICTSLTHILKISIGEGGTSFKDFRDLEGVNGKYGGQAWVYGRENKPCRKCGVKILKAKVAGRGTHWCPNCQK</sequence>
<feature type="initiator methionine" description="Removed" evidence="1">
    <location>
        <position position="1"/>
    </location>
</feature>
<feature type="chain" id="PRO_0000170849" description="Formamidopyrimidine-DNA glycosylase">
    <location>
        <begin position="2"/>
        <end position="283"/>
    </location>
</feature>
<feature type="zinc finger region" description="FPG-type" evidence="2">
    <location>
        <begin position="249"/>
        <end position="283"/>
    </location>
</feature>
<feature type="active site" description="Schiff-base intermediate with DNA" evidence="2">
    <location>
        <position position="2"/>
    </location>
</feature>
<feature type="active site" description="Proton donor" evidence="2">
    <location>
        <position position="3"/>
    </location>
</feature>
<feature type="active site" description="Proton donor; for beta-elimination activity" evidence="2">
    <location>
        <position position="60"/>
    </location>
</feature>
<feature type="active site" description="Proton donor; for delta-elimination activity" evidence="2">
    <location>
        <position position="273"/>
    </location>
</feature>
<feature type="binding site" evidence="2">
    <location>
        <position position="100"/>
    </location>
    <ligand>
        <name>DNA</name>
        <dbReference type="ChEBI" id="CHEBI:16991"/>
    </ligand>
</feature>
<feature type="binding site" evidence="2">
    <location>
        <position position="119"/>
    </location>
    <ligand>
        <name>DNA</name>
        <dbReference type="ChEBI" id="CHEBI:16991"/>
    </ligand>
</feature>
<feature type="binding site" evidence="2">
    <location>
        <position position="164"/>
    </location>
    <ligand>
        <name>DNA</name>
        <dbReference type="ChEBI" id="CHEBI:16991"/>
    </ligand>
</feature>
<protein>
    <recommendedName>
        <fullName evidence="2">Formamidopyrimidine-DNA glycosylase</fullName>
        <shortName evidence="2">Fapy-DNA glycosylase</shortName>
        <ecNumber evidence="2">3.2.2.23</ecNumber>
    </recommendedName>
    <alternativeName>
        <fullName evidence="2">DNA-(apurinic or apyrimidinic site) lyase MutM</fullName>
        <shortName evidence="2">AP lyase MutM</shortName>
        <ecNumber evidence="2">4.2.99.18</ecNumber>
    </alternativeName>
</protein>
<reference key="1">
    <citation type="journal article" date="2003" name="Proc. Natl. Acad. Sci. U.S.A.">
        <title>Genome sequence of the cyanobacterium Prochlorococcus marinus SS120, a nearly minimal oxyphototrophic genome.</title>
        <authorList>
            <person name="Dufresne A."/>
            <person name="Salanoubat M."/>
            <person name="Partensky F."/>
            <person name="Artiguenave F."/>
            <person name="Axmann I.M."/>
            <person name="Barbe V."/>
            <person name="Duprat S."/>
            <person name="Galperin M.Y."/>
            <person name="Koonin E.V."/>
            <person name="Le Gall F."/>
            <person name="Makarova K.S."/>
            <person name="Ostrowski M."/>
            <person name="Oztas S."/>
            <person name="Robert C."/>
            <person name="Rogozin I.B."/>
            <person name="Scanlan D.J."/>
            <person name="Tandeau de Marsac N."/>
            <person name="Weissenbach J."/>
            <person name="Wincker P."/>
            <person name="Wolf Y.I."/>
            <person name="Hess W.R."/>
        </authorList>
    </citation>
    <scope>NUCLEOTIDE SEQUENCE [LARGE SCALE GENOMIC DNA]</scope>
    <source>
        <strain>SARG / CCMP1375 / SS120</strain>
    </source>
</reference>
<keyword id="KW-0227">DNA damage</keyword>
<keyword id="KW-0234">DNA repair</keyword>
<keyword id="KW-0238">DNA-binding</keyword>
<keyword id="KW-0326">Glycosidase</keyword>
<keyword id="KW-0378">Hydrolase</keyword>
<keyword id="KW-0456">Lyase</keyword>
<keyword id="KW-0479">Metal-binding</keyword>
<keyword id="KW-0511">Multifunctional enzyme</keyword>
<keyword id="KW-1185">Reference proteome</keyword>
<keyword id="KW-0862">Zinc</keyword>
<keyword id="KW-0863">Zinc-finger</keyword>
<name>FPG_PROMA</name>
<comment type="function">
    <text evidence="2">Involved in base excision repair of DNA damaged by oxidation or by mutagenic agents. Acts as a DNA glycosylase that recognizes and removes damaged bases. Has a preference for oxidized purines, such as 7,8-dihydro-8-oxoguanine (8-oxoG). Has AP (apurinic/apyrimidinic) lyase activity and introduces nicks in the DNA strand. Cleaves the DNA backbone by beta-delta elimination to generate a single-strand break at the site of the removed base with both 3'- and 5'-phosphates.</text>
</comment>
<comment type="catalytic activity">
    <reaction evidence="2">
        <text>Hydrolysis of DNA containing ring-opened 7-methylguanine residues, releasing 2,6-diamino-4-hydroxy-5-(N-methyl)formamidopyrimidine.</text>
        <dbReference type="EC" id="3.2.2.23"/>
    </reaction>
</comment>
<comment type="catalytic activity">
    <reaction evidence="2">
        <text>2'-deoxyribonucleotide-(2'-deoxyribose 5'-phosphate)-2'-deoxyribonucleotide-DNA = a 3'-end 2'-deoxyribonucleotide-(2,3-dehydro-2,3-deoxyribose 5'-phosphate)-DNA + a 5'-end 5'-phospho-2'-deoxyribonucleoside-DNA + H(+)</text>
        <dbReference type="Rhea" id="RHEA:66592"/>
        <dbReference type="Rhea" id="RHEA-COMP:13180"/>
        <dbReference type="Rhea" id="RHEA-COMP:16897"/>
        <dbReference type="Rhea" id="RHEA-COMP:17067"/>
        <dbReference type="ChEBI" id="CHEBI:15378"/>
        <dbReference type="ChEBI" id="CHEBI:136412"/>
        <dbReference type="ChEBI" id="CHEBI:157695"/>
        <dbReference type="ChEBI" id="CHEBI:167181"/>
        <dbReference type="EC" id="4.2.99.18"/>
    </reaction>
</comment>
<comment type="cofactor">
    <cofactor evidence="2">
        <name>Zn(2+)</name>
        <dbReference type="ChEBI" id="CHEBI:29105"/>
    </cofactor>
    <text evidence="2">Binds 1 zinc ion per subunit.</text>
</comment>
<comment type="subunit">
    <text evidence="2">Monomer.</text>
</comment>
<comment type="similarity">
    <text evidence="2">Belongs to the FPG family.</text>
</comment>
<organism>
    <name type="scientific">Prochlorococcus marinus (strain SARG / CCMP1375 / SS120)</name>
    <dbReference type="NCBI Taxonomy" id="167539"/>
    <lineage>
        <taxon>Bacteria</taxon>
        <taxon>Bacillati</taxon>
        <taxon>Cyanobacteriota</taxon>
        <taxon>Cyanophyceae</taxon>
        <taxon>Synechococcales</taxon>
        <taxon>Prochlorococcaceae</taxon>
        <taxon>Prochlorococcus</taxon>
    </lineage>
</organism>
<proteinExistence type="inferred from homology"/>
<evidence type="ECO:0000250" key="1"/>
<evidence type="ECO:0000255" key="2">
    <source>
        <dbReference type="HAMAP-Rule" id="MF_00103"/>
    </source>
</evidence>
<dbReference type="EC" id="3.2.2.23" evidence="2"/>
<dbReference type="EC" id="4.2.99.18" evidence="2"/>
<dbReference type="EMBL" id="AE017126">
    <property type="protein sequence ID" value="AAP99416.1"/>
    <property type="molecule type" value="Genomic_DNA"/>
</dbReference>
<dbReference type="RefSeq" id="NP_874764.1">
    <property type="nucleotide sequence ID" value="NC_005042.1"/>
</dbReference>
<dbReference type="RefSeq" id="WP_011124525.1">
    <property type="nucleotide sequence ID" value="NC_005042.1"/>
</dbReference>
<dbReference type="SMR" id="Q7VDK6"/>
<dbReference type="STRING" id="167539.Pro_0370"/>
<dbReference type="EnsemblBacteria" id="AAP99416">
    <property type="protein sequence ID" value="AAP99416"/>
    <property type="gene ID" value="Pro_0370"/>
</dbReference>
<dbReference type="KEGG" id="pma:Pro_0370"/>
<dbReference type="PATRIC" id="fig|167539.5.peg.378"/>
<dbReference type="eggNOG" id="COG0266">
    <property type="taxonomic scope" value="Bacteria"/>
</dbReference>
<dbReference type="HOGENOM" id="CLU_038423_1_2_3"/>
<dbReference type="OrthoDB" id="9800855at2"/>
<dbReference type="Proteomes" id="UP000001420">
    <property type="component" value="Chromosome"/>
</dbReference>
<dbReference type="GO" id="GO:0034039">
    <property type="term" value="F:8-oxo-7,8-dihydroguanine DNA N-glycosylase activity"/>
    <property type="evidence" value="ECO:0007669"/>
    <property type="project" value="TreeGrafter"/>
</dbReference>
<dbReference type="GO" id="GO:0140078">
    <property type="term" value="F:class I DNA-(apurinic or apyrimidinic site) endonuclease activity"/>
    <property type="evidence" value="ECO:0007669"/>
    <property type="project" value="UniProtKB-EC"/>
</dbReference>
<dbReference type="GO" id="GO:0003684">
    <property type="term" value="F:damaged DNA binding"/>
    <property type="evidence" value="ECO:0007669"/>
    <property type="project" value="InterPro"/>
</dbReference>
<dbReference type="GO" id="GO:0008270">
    <property type="term" value="F:zinc ion binding"/>
    <property type="evidence" value="ECO:0007669"/>
    <property type="project" value="UniProtKB-UniRule"/>
</dbReference>
<dbReference type="GO" id="GO:0006284">
    <property type="term" value="P:base-excision repair"/>
    <property type="evidence" value="ECO:0007669"/>
    <property type="project" value="InterPro"/>
</dbReference>
<dbReference type="CDD" id="cd08966">
    <property type="entry name" value="EcFpg-like_N"/>
    <property type="match status" value="1"/>
</dbReference>
<dbReference type="FunFam" id="1.10.8.50:FF:000003">
    <property type="entry name" value="Formamidopyrimidine-DNA glycosylase"/>
    <property type="match status" value="1"/>
</dbReference>
<dbReference type="Gene3D" id="1.10.8.50">
    <property type="match status" value="1"/>
</dbReference>
<dbReference type="Gene3D" id="3.20.190.10">
    <property type="entry name" value="MutM-like, N-terminal"/>
    <property type="match status" value="1"/>
</dbReference>
<dbReference type="HAMAP" id="MF_00103">
    <property type="entry name" value="Fapy_DNA_glycosyl"/>
    <property type="match status" value="1"/>
</dbReference>
<dbReference type="InterPro" id="IPR015886">
    <property type="entry name" value="DNA_glyclase/AP_lyase_DNA-bd"/>
</dbReference>
<dbReference type="InterPro" id="IPR015887">
    <property type="entry name" value="DNA_glyclase_Znf_dom_DNA_BS"/>
</dbReference>
<dbReference type="InterPro" id="IPR020629">
    <property type="entry name" value="Formamido-pyr_DNA_Glyclase"/>
</dbReference>
<dbReference type="InterPro" id="IPR012319">
    <property type="entry name" value="FPG_cat"/>
</dbReference>
<dbReference type="InterPro" id="IPR035937">
    <property type="entry name" value="MutM-like_N-ter"/>
</dbReference>
<dbReference type="InterPro" id="IPR010979">
    <property type="entry name" value="Ribosomal_uS13-like_H2TH"/>
</dbReference>
<dbReference type="InterPro" id="IPR000214">
    <property type="entry name" value="Znf_DNA_glyclase/AP_lyase"/>
</dbReference>
<dbReference type="InterPro" id="IPR010663">
    <property type="entry name" value="Znf_FPG/IleRS"/>
</dbReference>
<dbReference type="NCBIfam" id="TIGR00577">
    <property type="entry name" value="fpg"/>
    <property type="match status" value="1"/>
</dbReference>
<dbReference type="NCBIfam" id="NF002211">
    <property type="entry name" value="PRK01103.1"/>
    <property type="match status" value="1"/>
</dbReference>
<dbReference type="NCBIfam" id="NF010551">
    <property type="entry name" value="PRK13945.1"/>
    <property type="match status" value="1"/>
</dbReference>
<dbReference type="PANTHER" id="PTHR22993">
    <property type="entry name" value="FORMAMIDOPYRIMIDINE-DNA GLYCOSYLASE"/>
    <property type="match status" value="1"/>
</dbReference>
<dbReference type="PANTHER" id="PTHR22993:SF9">
    <property type="entry name" value="FORMAMIDOPYRIMIDINE-DNA GLYCOSYLASE"/>
    <property type="match status" value="1"/>
</dbReference>
<dbReference type="Pfam" id="PF01149">
    <property type="entry name" value="Fapy_DNA_glyco"/>
    <property type="match status" value="1"/>
</dbReference>
<dbReference type="Pfam" id="PF06831">
    <property type="entry name" value="H2TH"/>
    <property type="match status" value="1"/>
</dbReference>
<dbReference type="Pfam" id="PF06827">
    <property type="entry name" value="zf-FPG_IleRS"/>
    <property type="match status" value="1"/>
</dbReference>
<dbReference type="SMART" id="SM00898">
    <property type="entry name" value="Fapy_DNA_glyco"/>
    <property type="match status" value="1"/>
</dbReference>
<dbReference type="SMART" id="SM01232">
    <property type="entry name" value="H2TH"/>
    <property type="match status" value="1"/>
</dbReference>
<dbReference type="SUPFAM" id="SSF57716">
    <property type="entry name" value="Glucocorticoid receptor-like (DNA-binding domain)"/>
    <property type="match status" value="1"/>
</dbReference>
<dbReference type="SUPFAM" id="SSF81624">
    <property type="entry name" value="N-terminal domain of MutM-like DNA repair proteins"/>
    <property type="match status" value="1"/>
</dbReference>
<dbReference type="SUPFAM" id="SSF46946">
    <property type="entry name" value="S13-like H2TH domain"/>
    <property type="match status" value="1"/>
</dbReference>
<dbReference type="PROSITE" id="PS51068">
    <property type="entry name" value="FPG_CAT"/>
    <property type="match status" value="1"/>
</dbReference>
<dbReference type="PROSITE" id="PS01242">
    <property type="entry name" value="ZF_FPG_1"/>
    <property type="match status" value="1"/>
</dbReference>
<dbReference type="PROSITE" id="PS51066">
    <property type="entry name" value="ZF_FPG_2"/>
    <property type="match status" value="1"/>
</dbReference>
<accession>Q7VDK6</accession>